<name>NUCS_MYCUA</name>
<dbReference type="EC" id="3.1.-.-" evidence="1"/>
<dbReference type="EMBL" id="CP000325">
    <property type="protein sequence ID" value="ABL06009.1"/>
    <property type="molecule type" value="Genomic_DNA"/>
</dbReference>
<dbReference type="SMR" id="A0PUJ0"/>
<dbReference type="KEGG" id="mul:MUL_3940"/>
<dbReference type="eggNOG" id="COG1637">
    <property type="taxonomic scope" value="Bacteria"/>
</dbReference>
<dbReference type="HOGENOM" id="CLU_069350_0_0_11"/>
<dbReference type="Proteomes" id="UP000000765">
    <property type="component" value="Chromosome"/>
</dbReference>
<dbReference type="GO" id="GO:0005737">
    <property type="term" value="C:cytoplasm"/>
    <property type="evidence" value="ECO:0007669"/>
    <property type="project" value="UniProtKB-SubCell"/>
</dbReference>
<dbReference type="GO" id="GO:0003677">
    <property type="term" value="F:DNA binding"/>
    <property type="evidence" value="ECO:0007669"/>
    <property type="project" value="UniProtKB-KW"/>
</dbReference>
<dbReference type="GO" id="GO:0000014">
    <property type="term" value="F:single-stranded DNA endodeoxyribonuclease activity"/>
    <property type="evidence" value="ECO:0007669"/>
    <property type="project" value="UniProtKB-UniRule"/>
</dbReference>
<dbReference type="CDD" id="cd22341">
    <property type="entry name" value="NucS-like"/>
    <property type="match status" value="1"/>
</dbReference>
<dbReference type="Gene3D" id="2.70.180.20">
    <property type="match status" value="1"/>
</dbReference>
<dbReference type="Gene3D" id="3.40.1350.10">
    <property type="match status" value="1"/>
</dbReference>
<dbReference type="HAMAP" id="MF_00722">
    <property type="entry name" value="NucS"/>
    <property type="match status" value="1"/>
</dbReference>
<dbReference type="InterPro" id="IPR002793">
    <property type="entry name" value="Endonuclease_NucS"/>
</dbReference>
<dbReference type="InterPro" id="IPR048301">
    <property type="entry name" value="NucS_C"/>
</dbReference>
<dbReference type="InterPro" id="IPR048302">
    <property type="entry name" value="NucS_N"/>
</dbReference>
<dbReference type="InterPro" id="IPR049173">
    <property type="entry name" value="NucS_N_sf"/>
</dbReference>
<dbReference type="InterPro" id="IPR011856">
    <property type="entry name" value="tRNA_endonuc-like_dom_sf"/>
</dbReference>
<dbReference type="NCBIfam" id="NF002876">
    <property type="entry name" value="PRK03298.1"/>
    <property type="match status" value="1"/>
</dbReference>
<dbReference type="PANTHER" id="PTHR38814">
    <property type="entry name" value="ENDONUCLEASE NUCS"/>
    <property type="match status" value="1"/>
</dbReference>
<dbReference type="PANTHER" id="PTHR38814:SF1">
    <property type="entry name" value="ENDONUCLEASE NUCS"/>
    <property type="match status" value="1"/>
</dbReference>
<dbReference type="Pfam" id="PF01939">
    <property type="entry name" value="NucS_C"/>
    <property type="match status" value="1"/>
</dbReference>
<dbReference type="Pfam" id="PF21003">
    <property type="entry name" value="NucS_N"/>
    <property type="match status" value="1"/>
</dbReference>
<comment type="function">
    <text evidence="1">Cleaves both 3' and 5' ssDNA extremities of branched DNA structures.</text>
</comment>
<comment type="subcellular location">
    <subcellularLocation>
        <location evidence="1">Cytoplasm</location>
    </subcellularLocation>
</comment>
<comment type="similarity">
    <text evidence="1">Belongs to the NucS endonuclease family.</text>
</comment>
<sequence>MIRVRLVIAQCTVDYVGRLTAHLPSARRLLLFKADGSVSVHADDRAYKPLNWMSPPCWLTEEPGGDSPVWVVTNKGGEQLRISVEEIEHDSSHELGVDPGLVKDGVEAHLQVLLAEHVQLLGEGYTLVRREYMTAIGPVDLLCRDESGGAVAVEIKRRGEIDGVEQLTRYLELLNRDSVLAPVKGVFAAQQIKPQARTLATDRGIRCVTLDYDKMRGMDSDEYRLF</sequence>
<organism>
    <name type="scientific">Mycobacterium ulcerans (strain Agy99)</name>
    <dbReference type="NCBI Taxonomy" id="362242"/>
    <lineage>
        <taxon>Bacteria</taxon>
        <taxon>Bacillati</taxon>
        <taxon>Actinomycetota</taxon>
        <taxon>Actinomycetes</taxon>
        <taxon>Mycobacteriales</taxon>
        <taxon>Mycobacteriaceae</taxon>
        <taxon>Mycobacterium</taxon>
        <taxon>Mycobacterium ulcerans group</taxon>
    </lineage>
</organism>
<feature type="chain" id="PRO_1000198203" description="Endonuclease NucS">
    <location>
        <begin position="1"/>
        <end position="226"/>
    </location>
</feature>
<protein>
    <recommendedName>
        <fullName evidence="1">Endonuclease NucS</fullName>
        <ecNumber evidence="1">3.1.-.-</ecNumber>
    </recommendedName>
</protein>
<keyword id="KW-0963">Cytoplasm</keyword>
<keyword id="KW-0238">DNA-binding</keyword>
<keyword id="KW-0255">Endonuclease</keyword>
<keyword id="KW-0378">Hydrolase</keyword>
<keyword id="KW-0540">Nuclease</keyword>
<gene>
    <name evidence="1" type="primary">nucS</name>
    <name type="ordered locus">MUL_3940</name>
</gene>
<evidence type="ECO:0000255" key="1">
    <source>
        <dbReference type="HAMAP-Rule" id="MF_00722"/>
    </source>
</evidence>
<proteinExistence type="inferred from homology"/>
<reference key="1">
    <citation type="journal article" date="2007" name="Genome Res.">
        <title>Reductive evolution and niche adaptation inferred from the genome of Mycobacterium ulcerans, the causative agent of Buruli ulcer.</title>
        <authorList>
            <person name="Stinear T.P."/>
            <person name="Seemann T."/>
            <person name="Pidot S."/>
            <person name="Frigui W."/>
            <person name="Reysset G."/>
            <person name="Garnier T."/>
            <person name="Meurice G."/>
            <person name="Simon D."/>
            <person name="Bouchier C."/>
            <person name="Ma L."/>
            <person name="Tichit M."/>
            <person name="Porter J.L."/>
            <person name="Ryan J."/>
            <person name="Johnson P.D.R."/>
            <person name="Davies J.K."/>
            <person name="Jenkin G.A."/>
            <person name="Small P.L.C."/>
            <person name="Jones L.M."/>
            <person name="Tekaia F."/>
            <person name="Laval F."/>
            <person name="Daffe M."/>
            <person name="Parkhill J."/>
            <person name="Cole S.T."/>
        </authorList>
    </citation>
    <scope>NUCLEOTIDE SEQUENCE [LARGE SCALE GENOMIC DNA]</scope>
    <source>
        <strain>Agy99</strain>
    </source>
</reference>
<accession>A0PUJ0</accession>